<gene>
    <name evidence="1" type="primary">infA</name>
    <name type="ordered locus">TW228</name>
</gene>
<keyword id="KW-0963">Cytoplasm</keyword>
<keyword id="KW-0396">Initiation factor</keyword>
<keyword id="KW-0648">Protein biosynthesis</keyword>
<keyword id="KW-0694">RNA-binding</keyword>
<keyword id="KW-0699">rRNA-binding</keyword>
<comment type="function">
    <text evidence="1">One of the essential components for the initiation of protein synthesis. Stabilizes the binding of IF-2 and IF-3 on the 30S subunit to which N-formylmethionyl-tRNA(fMet) subsequently binds. Helps modulate mRNA selection, yielding the 30S pre-initiation complex (PIC). Upon addition of the 50S ribosomal subunit IF-1, IF-2 and IF-3 are released leaving the mature 70S translation initiation complex.</text>
</comment>
<comment type="subunit">
    <text evidence="1">Component of the 30S ribosomal translation pre-initiation complex which assembles on the 30S ribosome in the order IF-2 and IF-3, IF-1 and N-formylmethionyl-tRNA(fMet); mRNA recruitment can occur at any time during PIC assembly.</text>
</comment>
<comment type="subcellular location">
    <subcellularLocation>
        <location evidence="1">Cytoplasm</location>
    </subcellularLocation>
</comment>
<comment type="similarity">
    <text evidence="1">Belongs to the IF-1 family.</text>
</comment>
<evidence type="ECO:0000255" key="1">
    <source>
        <dbReference type="HAMAP-Rule" id="MF_00075"/>
    </source>
</evidence>
<proteinExistence type="inferred from homology"/>
<accession>Q83I58</accession>
<protein>
    <recommendedName>
        <fullName evidence="1">Translation initiation factor IF-1</fullName>
    </recommendedName>
</protein>
<feature type="chain" id="PRO_0000095898" description="Translation initiation factor IF-1">
    <location>
        <begin position="1"/>
        <end position="73"/>
    </location>
</feature>
<feature type="domain" description="S1-like" evidence="1">
    <location>
        <begin position="1"/>
        <end position="73"/>
    </location>
</feature>
<dbReference type="EMBL" id="BX251410">
    <property type="protein sequence ID" value="CAD66905.1"/>
    <property type="molecule type" value="Genomic_DNA"/>
</dbReference>
<dbReference type="RefSeq" id="WP_011096186.1">
    <property type="nucleotide sequence ID" value="NC_004551.1"/>
</dbReference>
<dbReference type="SMR" id="Q83I58"/>
<dbReference type="GeneID" id="67388005"/>
<dbReference type="KEGG" id="tws:TW228"/>
<dbReference type="HOGENOM" id="CLU_151267_1_0_11"/>
<dbReference type="GO" id="GO:0005829">
    <property type="term" value="C:cytosol"/>
    <property type="evidence" value="ECO:0007669"/>
    <property type="project" value="TreeGrafter"/>
</dbReference>
<dbReference type="GO" id="GO:0043022">
    <property type="term" value="F:ribosome binding"/>
    <property type="evidence" value="ECO:0007669"/>
    <property type="project" value="UniProtKB-UniRule"/>
</dbReference>
<dbReference type="GO" id="GO:0019843">
    <property type="term" value="F:rRNA binding"/>
    <property type="evidence" value="ECO:0007669"/>
    <property type="project" value="UniProtKB-UniRule"/>
</dbReference>
<dbReference type="GO" id="GO:0003743">
    <property type="term" value="F:translation initiation factor activity"/>
    <property type="evidence" value="ECO:0007669"/>
    <property type="project" value="UniProtKB-UniRule"/>
</dbReference>
<dbReference type="CDD" id="cd04451">
    <property type="entry name" value="S1_IF1"/>
    <property type="match status" value="1"/>
</dbReference>
<dbReference type="FunFam" id="2.40.50.140:FF:000002">
    <property type="entry name" value="Translation initiation factor IF-1"/>
    <property type="match status" value="1"/>
</dbReference>
<dbReference type="Gene3D" id="2.40.50.140">
    <property type="entry name" value="Nucleic acid-binding proteins"/>
    <property type="match status" value="1"/>
</dbReference>
<dbReference type="HAMAP" id="MF_00075">
    <property type="entry name" value="IF_1"/>
    <property type="match status" value="1"/>
</dbReference>
<dbReference type="InterPro" id="IPR012340">
    <property type="entry name" value="NA-bd_OB-fold"/>
</dbReference>
<dbReference type="InterPro" id="IPR006196">
    <property type="entry name" value="RNA-binding_domain_S1_IF1"/>
</dbReference>
<dbReference type="InterPro" id="IPR004368">
    <property type="entry name" value="TIF_IF1"/>
</dbReference>
<dbReference type="NCBIfam" id="TIGR00008">
    <property type="entry name" value="infA"/>
    <property type="match status" value="1"/>
</dbReference>
<dbReference type="PANTHER" id="PTHR33370">
    <property type="entry name" value="TRANSLATION INITIATION FACTOR IF-1, CHLOROPLASTIC"/>
    <property type="match status" value="1"/>
</dbReference>
<dbReference type="PANTHER" id="PTHR33370:SF1">
    <property type="entry name" value="TRANSLATION INITIATION FACTOR IF-1, CHLOROPLASTIC"/>
    <property type="match status" value="1"/>
</dbReference>
<dbReference type="Pfam" id="PF01176">
    <property type="entry name" value="eIF-1a"/>
    <property type="match status" value="1"/>
</dbReference>
<dbReference type="SUPFAM" id="SSF50249">
    <property type="entry name" value="Nucleic acid-binding proteins"/>
    <property type="match status" value="1"/>
</dbReference>
<dbReference type="PROSITE" id="PS50832">
    <property type="entry name" value="S1_IF1_TYPE"/>
    <property type="match status" value="1"/>
</dbReference>
<sequence length="73" mass="8376">MAKKDGVIELEGSVLEALPNATFRVELSNGHKVLAHISGRMRQHYIRILPEDRVVVELSPYDLARGRIVYRYK</sequence>
<reference key="1">
    <citation type="journal article" date="2003" name="Lancet">
        <title>Sequencing and analysis of the genome of the Whipple's disease bacterium Tropheryma whipplei.</title>
        <authorList>
            <person name="Bentley S.D."/>
            <person name="Maiwald M."/>
            <person name="Murphy L.D."/>
            <person name="Pallen M.J."/>
            <person name="Yeats C.A."/>
            <person name="Dover L.G."/>
            <person name="Norbertczak H.T."/>
            <person name="Besra G.S."/>
            <person name="Quail M.A."/>
            <person name="Harris D.E."/>
            <person name="von Herbay A."/>
            <person name="Goble A."/>
            <person name="Rutter S."/>
            <person name="Squares R."/>
            <person name="Squares S."/>
            <person name="Barrell B.G."/>
            <person name="Parkhill J."/>
            <person name="Relman D.A."/>
        </authorList>
    </citation>
    <scope>NUCLEOTIDE SEQUENCE [LARGE SCALE GENOMIC DNA]</scope>
    <source>
        <strain>TW08/27</strain>
    </source>
</reference>
<name>IF1_TROW8</name>
<organism>
    <name type="scientific">Tropheryma whipplei (strain TW08/27)</name>
    <name type="common">Whipple's bacillus</name>
    <dbReference type="NCBI Taxonomy" id="218496"/>
    <lineage>
        <taxon>Bacteria</taxon>
        <taxon>Bacillati</taxon>
        <taxon>Actinomycetota</taxon>
        <taxon>Actinomycetes</taxon>
        <taxon>Micrococcales</taxon>
        <taxon>Tropherymataceae</taxon>
        <taxon>Tropheryma</taxon>
    </lineage>
</organism>